<sequence length="44" mass="5120">MKRTYQPSKLVRKRRHGFRARLATTGGRKVLAARRARGRKRLSA</sequence>
<comment type="similarity">
    <text evidence="1">Belongs to the bacterial ribosomal protein bL34 family.</text>
</comment>
<organism>
    <name type="scientific">Bradyrhizobium sp. (strain ORS 278)</name>
    <dbReference type="NCBI Taxonomy" id="114615"/>
    <lineage>
        <taxon>Bacteria</taxon>
        <taxon>Pseudomonadati</taxon>
        <taxon>Pseudomonadota</taxon>
        <taxon>Alphaproteobacteria</taxon>
        <taxon>Hyphomicrobiales</taxon>
        <taxon>Nitrobacteraceae</taxon>
        <taxon>Bradyrhizobium</taxon>
    </lineage>
</organism>
<gene>
    <name evidence="1" type="primary">rpmH</name>
    <name type="ordered locus">BRADO0784</name>
</gene>
<dbReference type="EMBL" id="CU234118">
    <property type="protein sequence ID" value="CAL74708.1"/>
    <property type="molecule type" value="Genomic_DNA"/>
</dbReference>
<dbReference type="RefSeq" id="WP_006609582.1">
    <property type="nucleotide sequence ID" value="NC_009445.1"/>
</dbReference>
<dbReference type="SMR" id="A4YLD2"/>
<dbReference type="STRING" id="114615.BRADO0784"/>
<dbReference type="GeneID" id="66891655"/>
<dbReference type="KEGG" id="bra:BRADO0784"/>
<dbReference type="eggNOG" id="COG0230">
    <property type="taxonomic scope" value="Bacteria"/>
</dbReference>
<dbReference type="HOGENOM" id="CLU_129938_2_0_5"/>
<dbReference type="Proteomes" id="UP000001994">
    <property type="component" value="Chromosome"/>
</dbReference>
<dbReference type="GO" id="GO:1990904">
    <property type="term" value="C:ribonucleoprotein complex"/>
    <property type="evidence" value="ECO:0007669"/>
    <property type="project" value="UniProtKB-KW"/>
</dbReference>
<dbReference type="GO" id="GO:0005840">
    <property type="term" value="C:ribosome"/>
    <property type="evidence" value="ECO:0007669"/>
    <property type="project" value="UniProtKB-KW"/>
</dbReference>
<dbReference type="GO" id="GO:0003735">
    <property type="term" value="F:structural constituent of ribosome"/>
    <property type="evidence" value="ECO:0007669"/>
    <property type="project" value="InterPro"/>
</dbReference>
<dbReference type="GO" id="GO:0006412">
    <property type="term" value="P:translation"/>
    <property type="evidence" value="ECO:0007669"/>
    <property type="project" value="UniProtKB-UniRule"/>
</dbReference>
<dbReference type="FunFam" id="1.10.287.3980:FF:000001">
    <property type="entry name" value="Mitochondrial ribosomal protein L34"/>
    <property type="match status" value="1"/>
</dbReference>
<dbReference type="Gene3D" id="1.10.287.3980">
    <property type="match status" value="1"/>
</dbReference>
<dbReference type="HAMAP" id="MF_00391">
    <property type="entry name" value="Ribosomal_bL34"/>
    <property type="match status" value="1"/>
</dbReference>
<dbReference type="InterPro" id="IPR000271">
    <property type="entry name" value="Ribosomal_bL34"/>
</dbReference>
<dbReference type="InterPro" id="IPR020939">
    <property type="entry name" value="Ribosomal_bL34_CS"/>
</dbReference>
<dbReference type="NCBIfam" id="TIGR01030">
    <property type="entry name" value="rpmH_bact"/>
    <property type="match status" value="1"/>
</dbReference>
<dbReference type="PANTHER" id="PTHR14503:SF4">
    <property type="entry name" value="LARGE RIBOSOMAL SUBUNIT PROTEIN BL34M"/>
    <property type="match status" value="1"/>
</dbReference>
<dbReference type="PANTHER" id="PTHR14503">
    <property type="entry name" value="MITOCHONDRIAL RIBOSOMAL PROTEIN 34 FAMILY MEMBER"/>
    <property type="match status" value="1"/>
</dbReference>
<dbReference type="Pfam" id="PF00468">
    <property type="entry name" value="Ribosomal_L34"/>
    <property type="match status" value="1"/>
</dbReference>
<dbReference type="PROSITE" id="PS00784">
    <property type="entry name" value="RIBOSOMAL_L34"/>
    <property type="match status" value="1"/>
</dbReference>
<evidence type="ECO:0000255" key="1">
    <source>
        <dbReference type="HAMAP-Rule" id="MF_00391"/>
    </source>
</evidence>
<evidence type="ECO:0000305" key="2"/>
<feature type="chain" id="PRO_1000013289" description="Large ribosomal subunit protein bL34">
    <location>
        <begin position="1"/>
        <end position="44"/>
    </location>
</feature>
<name>RL34_BRASO</name>
<protein>
    <recommendedName>
        <fullName evidence="1">Large ribosomal subunit protein bL34</fullName>
    </recommendedName>
    <alternativeName>
        <fullName evidence="2">50S ribosomal protein L34</fullName>
    </alternativeName>
</protein>
<reference key="1">
    <citation type="journal article" date="2007" name="Science">
        <title>Legumes symbioses: absence of nod genes in photosynthetic bradyrhizobia.</title>
        <authorList>
            <person name="Giraud E."/>
            <person name="Moulin L."/>
            <person name="Vallenet D."/>
            <person name="Barbe V."/>
            <person name="Cytryn E."/>
            <person name="Avarre J.-C."/>
            <person name="Jaubert M."/>
            <person name="Simon D."/>
            <person name="Cartieaux F."/>
            <person name="Prin Y."/>
            <person name="Bena G."/>
            <person name="Hannibal L."/>
            <person name="Fardoux J."/>
            <person name="Kojadinovic M."/>
            <person name="Vuillet L."/>
            <person name="Lajus A."/>
            <person name="Cruveiller S."/>
            <person name="Rouy Z."/>
            <person name="Mangenot S."/>
            <person name="Segurens B."/>
            <person name="Dossat C."/>
            <person name="Franck W.L."/>
            <person name="Chang W.-S."/>
            <person name="Saunders E."/>
            <person name="Bruce D."/>
            <person name="Richardson P."/>
            <person name="Normand P."/>
            <person name="Dreyfus B."/>
            <person name="Pignol D."/>
            <person name="Stacey G."/>
            <person name="Emerich D."/>
            <person name="Vermeglio A."/>
            <person name="Medigue C."/>
            <person name="Sadowsky M."/>
        </authorList>
    </citation>
    <scope>NUCLEOTIDE SEQUENCE [LARGE SCALE GENOMIC DNA]</scope>
    <source>
        <strain>ORS 278</strain>
    </source>
</reference>
<keyword id="KW-1185">Reference proteome</keyword>
<keyword id="KW-0687">Ribonucleoprotein</keyword>
<keyword id="KW-0689">Ribosomal protein</keyword>
<accession>A4YLD2</accession>
<proteinExistence type="inferred from homology"/>